<feature type="chain" id="PRO_0000143404" description="Maturase K">
    <location>
        <begin position="1"/>
        <end position="508"/>
    </location>
</feature>
<keyword id="KW-0150">Chloroplast</keyword>
<keyword id="KW-0507">mRNA processing</keyword>
<keyword id="KW-0934">Plastid</keyword>
<keyword id="KW-0694">RNA-binding</keyword>
<keyword id="KW-0819">tRNA processing</keyword>
<comment type="function">
    <text evidence="1">Usually encoded in the trnK tRNA gene intron. Probably assists in splicing its own and other chloroplast group II introns.</text>
</comment>
<comment type="subcellular location">
    <subcellularLocation>
        <location>Plastid</location>
        <location>Chloroplast</location>
    </subcellularLocation>
</comment>
<comment type="similarity">
    <text evidence="1">Belongs to the intron maturase 2 family. MatK subfamily.</text>
</comment>
<reference key="1">
    <citation type="journal article" date="2001" name="Am. J. Bot.">
        <title>Phylogenetic relationships of Theaceae inferred from chloroplast DNA sequence data.</title>
        <authorList>
            <person name="Prince L.M."/>
            <person name="Parks C.R."/>
        </authorList>
    </citation>
    <scope>NUCLEOTIDE SEQUENCE [GENOMIC DNA]</scope>
    <source>
        <tissue>Leaf</tissue>
    </source>
</reference>
<protein>
    <recommendedName>
        <fullName evidence="1">Maturase K</fullName>
    </recommendedName>
    <alternativeName>
        <fullName evidence="1">Intron maturase</fullName>
    </alternativeName>
</protein>
<accession>Q8WIU9</accession>
<geneLocation type="chloroplast"/>
<evidence type="ECO:0000255" key="1">
    <source>
        <dbReference type="HAMAP-Rule" id="MF_01390"/>
    </source>
</evidence>
<dbReference type="EMBL" id="AF380085">
    <property type="protein sequence ID" value="AAL60381.1"/>
    <property type="molecule type" value="Genomic_DNA"/>
</dbReference>
<dbReference type="RefSeq" id="YP_009418775.1">
    <property type="nucleotide sequence ID" value="NC_035699.1"/>
</dbReference>
<dbReference type="GeneID" id="33905263"/>
<dbReference type="GO" id="GO:0009507">
    <property type="term" value="C:chloroplast"/>
    <property type="evidence" value="ECO:0007669"/>
    <property type="project" value="UniProtKB-SubCell"/>
</dbReference>
<dbReference type="GO" id="GO:0003723">
    <property type="term" value="F:RNA binding"/>
    <property type="evidence" value="ECO:0007669"/>
    <property type="project" value="UniProtKB-KW"/>
</dbReference>
<dbReference type="GO" id="GO:0006397">
    <property type="term" value="P:mRNA processing"/>
    <property type="evidence" value="ECO:0007669"/>
    <property type="project" value="UniProtKB-KW"/>
</dbReference>
<dbReference type="GO" id="GO:0008380">
    <property type="term" value="P:RNA splicing"/>
    <property type="evidence" value="ECO:0007669"/>
    <property type="project" value="UniProtKB-UniRule"/>
</dbReference>
<dbReference type="GO" id="GO:0008033">
    <property type="term" value="P:tRNA processing"/>
    <property type="evidence" value="ECO:0007669"/>
    <property type="project" value="UniProtKB-KW"/>
</dbReference>
<dbReference type="HAMAP" id="MF_01390">
    <property type="entry name" value="MatK"/>
    <property type="match status" value="1"/>
</dbReference>
<dbReference type="InterPro" id="IPR024937">
    <property type="entry name" value="Domain_X"/>
</dbReference>
<dbReference type="InterPro" id="IPR002866">
    <property type="entry name" value="Maturase_MatK"/>
</dbReference>
<dbReference type="InterPro" id="IPR024942">
    <property type="entry name" value="Maturase_MatK_N"/>
</dbReference>
<dbReference type="PANTHER" id="PTHR34811">
    <property type="entry name" value="MATURASE K"/>
    <property type="match status" value="1"/>
</dbReference>
<dbReference type="PANTHER" id="PTHR34811:SF1">
    <property type="entry name" value="MATURASE K"/>
    <property type="match status" value="1"/>
</dbReference>
<dbReference type="Pfam" id="PF01348">
    <property type="entry name" value="Intron_maturas2"/>
    <property type="match status" value="1"/>
</dbReference>
<dbReference type="Pfam" id="PF01824">
    <property type="entry name" value="MatK_N"/>
    <property type="match status" value="1"/>
</dbReference>
<gene>
    <name evidence="1" type="primary">matK</name>
</gene>
<name>MATK_GORLA</name>
<organism>
    <name type="scientific">Gordonia lasianthus</name>
    <name type="common">Loblolly bay</name>
    <dbReference type="NCBI Taxonomy" id="182306"/>
    <lineage>
        <taxon>Eukaryota</taxon>
        <taxon>Viridiplantae</taxon>
        <taxon>Streptophyta</taxon>
        <taxon>Embryophyta</taxon>
        <taxon>Tracheophyta</taxon>
        <taxon>Spermatophyta</taxon>
        <taxon>Magnoliopsida</taxon>
        <taxon>eudicotyledons</taxon>
        <taxon>Gunneridae</taxon>
        <taxon>Pentapetalae</taxon>
        <taxon>asterids</taxon>
        <taxon>Ericales</taxon>
        <taxon>Theaceae</taxon>
        <taxon>Gordonia</taxon>
    </lineage>
</organism>
<sequence length="508" mass="60236">MEEFKRYLELDRSQQHDFVYPLIFQEYIYALAHDHGLNRSILLENIGYDNKSSLLIVKRLITHLITQMHQQNHFLFSANDSNQNPFFGHNTNLYSQMILEGFAVVVEIPFSLRLRFSLEGKEIVKSQNLRSIHSIFPFLEDKFSHLNYVLDILIPHSIHLEILVQTLRYWVKDASSLYLLRFFLHEYRNWNSLITPKKSSFSFSKRNQRLFLFLYNFHICEYESIFVFLRNQSSHLRSISSGTFLERRYFYGKIEHFLEVFTKDFQAVLWLFKDPFIHYVRYQGKSILASKGTSLLMNKWKYYLVNFWQCYFYMWSQPGRIHTNQLSKHSLDFLGYLSSVRLNPSMVRSQMLENSFLIGNTIKKFDTLVPIIPMIGSLSKAKFCNVLGHPISKPVWTDLSDSDILDQFGRIYRNLSHYHSGSSKKTSLYQIKYILRLSCARTLARKHKSTVRAFLKRLGSELLEEFFTGEEQVFSLTFPKASSTSRGLYRRRIWYLDIICINDLANHE</sequence>
<proteinExistence type="inferred from homology"/>